<protein>
    <recommendedName>
        <fullName>Threonine--tRNA ligase catalytic subunit</fullName>
        <ecNumber evidence="3">6.1.1.3</ecNumber>
    </recommendedName>
    <alternativeName>
        <fullName>Threonyl-tRNA synthetase catalytic subunit</fullName>
        <shortName>ThrRS-cat</shortName>
    </alternativeName>
</protein>
<accession>C3MKT5</accession>
<gene>
    <name evidence="4" type="primary">thrS-cat</name>
    <name evidence="3" type="synonym">thrS</name>
    <name type="ordered locus">LS215_0307</name>
</gene>
<evidence type="ECO:0000250" key="1">
    <source>
        <dbReference type="UniProtKB" id="Q97VW8"/>
    </source>
</evidence>
<evidence type="ECO:0000250" key="2">
    <source>
        <dbReference type="UniProtKB" id="Q9YDW0"/>
    </source>
</evidence>
<evidence type="ECO:0000255" key="3">
    <source>
        <dbReference type="HAMAP-Rule" id="MF_00184"/>
    </source>
</evidence>
<evidence type="ECO:0000305" key="4"/>
<dbReference type="EC" id="6.1.1.3" evidence="3"/>
<dbReference type="EMBL" id="CP001399">
    <property type="protein sequence ID" value="ACP34460.1"/>
    <property type="molecule type" value="Genomic_DNA"/>
</dbReference>
<dbReference type="RefSeq" id="WP_012712907.1">
    <property type="nucleotide sequence ID" value="NC_012589.1"/>
</dbReference>
<dbReference type="SMR" id="C3MKT5"/>
<dbReference type="GeneID" id="7797379"/>
<dbReference type="KEGG" id="sis:LS215_0307"/>
<dbReference type="HOGENOM" id="CLU_008554_0_1_2"/>
<dbReference type="OrthoDB" id="372136at2157"/>
<dbReference type="Proteomes" id="UP000001747">
    <property type="component" value="Chromosome"/>
</dbReference>
<dbReference type="GO" id="GO:0005737">
    <property type="term" value="C:cytoplasm"/>
    <property type="evidence" value="ECO:0007669"/>
    <property type="project" value="UniProtKB-SubCell"/>
</dbReference>
<dbReference type="GO" id="GO:0005524">
    <property type="term" value="F:ATP binding"/>
    <property type="evidence" value="ECO:0007669"/>
    <property type="project" value="UniProtKB-UniRule"/>
</dbReference>
<dbReference type="GO" id="GO:0046872">
    <property type="term" value="F:metal ion binding"/>
    <property type="evidence" value="ECO:0007669"/>
    <property type="project" value="UniProtKB-KW"/>
</dbReference>
<dbReference type="GO" id="GO:0004829">
    <property type="term" value="F:threonine-tRNA ligase activity"/>
    <property type="evidence" value="ECO:0007669"/>
    <property type="project" value="UniProtKB-UniRule"/>
</dbReference>
<dbReference type="GO" id="GO:0000049">
    <property type="term" value="F:tRNA binding"/>
    <property type="evidence" value="ECO:0007669"/>
    <property type="project" value="UniProtKB-KW"/>
</dbReference>
<dbReference type="GO" id="GO:0006435">
    <property type="term" value="P:threonyl-tRNA aminoacylation"/>
    <property type="evidence" value="ECO:0007669"/>
    <property type="project" value="UniProtKB-UniRule"/>
</dbReference>
<dbReference type="CDD" id="cd00860">
    <property type="entry name" value="ThrRS_anticodon"/>
    <property type="match status" value="1"/>
</dbReference>
<dbReference type="CDD" id="cd00771">
    <property type="entry name" value="ThrRS_core"/>
    <property type="match status" value="1"/>
</dbReference>
<dbReference type="FunFam" id="3.30.930.10:FF:000002">
    <property type="entry name" value="Threonine--tRNA ligase"/>
    <property type="match status" value="1"/>
</dbReference>
<dbReference type="FunFam" id="3.40.50.800:FF:000001">
    <property type="entry name" value="Threonine--tRNA ligase"/>
    <property type="match status" value="1"/>
</dbReference>
<dbReference type="Gene3D" id="3.40.50.800">
    <property type="entry name" value="Anticodon-binding domain"/>
    <property type="match status" value="1"/>
</dbReference>
<dbReference type="Gene3D" id="3.30.930.10">
    <property type="entry name" value="Bira Bifunctional Protein, Domain 2"/>
    <property type="match status" value="1"/>
</dbReference>
<dbReference type="HAMAP" id="MF_00184">
    <property type="entry name" value="Thr_tRNA_synth"/>
    <property type="match status" value="1"/>
</dbReference>
<dbReference type="InterPro" id="IPR002314">
    <property type="entry name" value="aa-tRNA-synt_IIb"/>
</dbReference>
<dbReference type="InterPro" id="IPR006195">
    <property type="entry name" value="aa-tRNA-synth_II"/>
</dbReference>
<dbReference type="InterPro" id="IPR045864">
    <property type="entry name" value="aa-tRNA-synth_II/BPL/LPL"/>
</dbReference>
<dbReference type="InterPro" id="IPR004154">
    <property type="entry name" value="Anticodon-bd"/>
</dbReference>
<dbReference type="InterPro" id="IPR036621">
    <property type="entry name" value="Anticodon-bd_dom_sf"/>
</dbReference>
<dbReference type="InterPro" id="IPR002320">
    <property type="entry name" value="Thr-tRNA-ligase_IIa"/>
</dbReference>
<dbReference type="InterPro" id="IPR018163">
    <property type="entry name" value="Thr/Ala-tRNA-synth_IIc_edit"/>
</dbReference>
<dbReference type="InterPro" id="IPR047246">
    <property type="entry name" value="ThrRS_anticodon"/>
</dbReference>
<dbReference type="InterPro" id="IPR033728">
    <property type="entry name" value="ThrRS_core"/>
</dbReference>
<dbReference type="NCBIfam" id="TIGR00418">
    <property type="entry name" value="thrS"/>
    <property type="match status" value="1"/>
</dbReference>
<dbReference type="PANTHER" id="PTHR11451:SF44">
    <property type="entry name" value="THREONINE--TRNA LIGASE, CHLOROPLASTIC_MITOCHONDRIAL 2"/>
    <property type="match status" value="1"/>
</dbReference>
<dbReference type="PANTHER" id="PTHR11451">
    <property type="entry name" value="THREONINE-TRNA LIGASE"/>
    <property type="match status" value="1"/>
</dbReference>
<dbReference type="Pfam" id="PF03129">
    <property type="entry name" value="HGTP_anticodon"/>
    <property type="match status" value="1"/>
</dbReference>
<dbReference type="Pfam" id="PF00587">
    <property type="entry name" value="tRNA-synt_2b"/>
    <property type="match status" value="1"/>
</dbReference>
<dbReference type="PRINTS" id="PR01047">
    <property type="entry name" value="TRNASYNTHTHR"/>
</dbReference>
<dbReference type="SUPFAM" id="SSF52954">
    <property type="entry name" value="Class II aaRS ABD-related"/>
    <property type="match status" value="1"/>
</dbReference>
<dbReference type="SUPFAM" id="SSF55681">
    <property type="entry name" value="Class II aaRS and biotin synthetases"/>
    <property type="match status" value="1"/>
</dbReference>
<dbReference type="SUPFAM" id="SSF55186">
    <property type="entry name" value="ThrRS/AlaRS common domain"/>
    <property type="match status" value="1"/>
</dbReference>
<dbReference type="PROSITE" id="PS50862">
    <property type="entry name" value="AA_TRNA_LIGASE_II"/>
    <property type="match status" value="1"/>
</dbReference>
<keyword id="KW-0030">Aminoacyl-tRNA synthetase</keyword>
<keyword id="KW-0067">ATP-binding</keyword>
<keyword id="KW-0963">Cytoplasm</keyword>
<keyword id="KW-0436">Ligase</keyword>
<keyword id="KW-0479">Metal-binding</keyword>
<keyword id="KW-0547">Nucleotide-binding</keyword>
<keyword id="KW-0648">Protein biosynthesis</keyword>
<keyword id="KW-0694">RNA-binding</keyword>
<keyword id="KW-0820">tRNA-binding</keyword>
<keyword id="KW-0862">Zinc</keyword>
<reference key="1">
    <citation type="journal article" date="2009" name="Proc. Natl. Acad. Sci. U.S.A.">
        <title>Biogeography of the Sulfolobus islandicus pan-genome.</title>
        <authorList>
            <person name="Reno M.L."/>
            <person name="Held N.L."/>
            <person name="Fields C.J."/>
            <person name="Burke P.V."/>
            <person name="Whitaker R.J."/>
        </authorList>
    </citation>
    <scope>NUCLEOTIDE SEQUENCE [LARGE SCALE GENOMIC DNA]</scope>
    <source>
        <strain>L.S.2.15 / Lassen #1</strain>
    </source>
</reference>
<feature type="chain" id="PRO_1000203922" description="Threonine--tRNA ligase catalytic subunit">
    <location>
        <begin position="1"/>
        <end position="545"/>
    </location>
</feature>
<feature type="region of interest" description="Catalytic" evidence="3">
    <location>
        <begin position="139"/>
        <end position="433"/>
    </location>
</feature>
<feature type="binding site" evidence="3">
    <location>
        <position position="231"/>
    </location>
    <ligand>
        <name>Zn(2+)</name>
        <dbReference type="ChEBI" id="CHEBI:29105"/>
    </ligand>
</feature>
<feature type="binding site" evidence="3">
    <location>
        <position position="282"/>
    </location>
    <ligand>
        <name>Zn(2+)</name>
        <dbReference type="ChEBI" id="CHEBI:29105"/>
    </ligand>
</feature>
<feature type="binding site" evidence="3">
    <location>
        <position position="410"/>
    </location>
    <ligand>
        <name>Zn(2+)</name>
        <dbReference type="ChEBI" id="CHEBI:29105"/>
    </ligand>
</feature>
<comment type="function">
    <text evidence="1">Catalyzes the attachment of threonine to tRNA(Thr) in a two-step reaction: L-threonine is first activated by ATP to form Thr-AMP and then transferred to the acceptor end of tRNA(Thr). Also activates L-serine and transfers it to tRNA(Thr) but cannot deacylate incorrectly charged amino acid; unlike most archaea the editing function is found in a freestanding protein.</text>
</comment>
<comment type="catalytic activity">
    <reaction evidence="3">
        <text>tRNA(Thr) + L-threonine + ATP = L-threonyl-tRNA(Thr) + AMP + diphosphate + H(+)</text>
        <dbReference type="Rhea" id="RHEA:24624"/>
        <dbReference type="Rhea" id="RHEA-COMP:9670"/>
        <dbReference type="Rhea" id="RHEA-COMP:9704"/>
        <dbReference type="ChEBI" id="CHEBI:15378"/>
        <dbReference type="ChEBI" id="CHEBI:30616"/>
        <dbReference type="ChEBI" id="CHEBI:33019"/>
        <dbReference type="ChEBI" id="CHEBI:57926"/>
        <dbReference type="ChEBI" id="CHEBI:78442"/>
        <dbReference type="ChEBI" id="CHEBI:78534"/>
        <dbReference type="ChEBI" id="CHEBI:456215"/>
        <dbReference type="EC" id="6.1.1.3"/>
    </reaction>
</comment>
<comment type="cofactor">
    <cofactor evidence="3">
        <name>Zn(2+)</name>
        <dbReference type="ChEBI" id="CHEBI:29105"/>
    </cofactor>
    <text evidence="3">Binds 1 zinc ion per subunit.</text>
</comment>
<comment type="subunit">
    <text evidence="1 2">Homodimer (By similarity). Probably interacts with its editing subunit (By similarity).</text>
</comment>
<comment type="subcellular location">
    <subcellularLocation>
        <location evidence="3">Cytoplasm</location>
    </subcellularLocation>
</comment>
<comment type="similarity">
    <text evidence="3">Belongs to the class-II aminoacyl-tRNA synthetase family.</text>
</comment>
<name>SYTC_SACI2</name>
<sequence length="545" mass="63245">MESYKPVWLKGAVILAINLIDKGYKPVAVGLGERDFYIDVKSDTSITLDEVKKAINENVLANVSIENNQIVYKGNKVSIIEDKVSISTNLNPKYFEILNISTHHPNPNEQYVRIRGVAFETEEQLKDYLTWLEKAEETDHRLIGEKLDLFSFHEEAGSGLVLFHPKGQTIRNELIAFMREINDSMGYQEVYTSHVFKTDIWKISGHYTLYRDKLIVFNMEGDEYGVKPMNCPAHILIYKSKPRTYRDLPIRFSEFGHVYRWEKKGELYGLLRVRGFVQDDGHIFLREDQLREEIKMLISKTVEVWHKFGFKDDDIKPYLSTRPDESIGSDELWEKATNALISALQESGLKFGIKEKEGAFYGPKIDFEIRDSLGRWWQLSTIQVDFNLPERFKLEYIDKDGIKKRPVMVHRAIYGSIDRFVAILLEHFKGKLPTWLSSVQVRVLPITDEVNEYAEKVLNDMRKRRIRAEIDYAGETLSKRIKNAYDQGVPYILIVGKKEASEGTVTVRARGNIEVRNVKFEKFLELLITEIAQRDVEQTTVKALK</sequence>
<organism>
    <name type="scientific">Saccharolobus islandicus (strain L.S.2.15 / Lassen #1)</name>
    <name type="common">Sulfolobus islandicus</name>
    <dbReference type="NCBI Taxonomy" id="429572"/>
    <lineage>
        <taxon>Archaea</taxon>
        <taxon>Thermoproteota</taxon>
        <taxon>Thermoprotei</taxon>
        <taxon>Sulfolobales</taxon>
        <taxon>Sulfolobaceae</taxon>
        <taxon>Saccharolobus</taxon>
    </lineage>
</organism>
<proteinExistence type="inferred from homology"/>